<gene>
    <name type="primary">ppa</name>
</gene>
<reference key="1">
    <citation type="journal article" date="2007" name="FEBS J.">
        <title>Comparative biochemical and functional studies of family I soluble inorganic pyrophosphatases from photosynthetic bacteria.</title>
        <authorList>
            <person name="Gomez-Garcia M.R."/>
            <person name="Losada M."/>
            <person name="Serrano A."/>
        </authorList>
    </citation>
    <scope>PROTEIN SEQUENCE</scope>
    <scope>CATALYTIC ACTIVITY</scope>
    <scope>COFACTOR</scope>
    <scope>ACTIVITY REGULATION</scope>
    <scope>BIOPHYSICOCHEMICAL PROPERTIES</scope>
    <scope>SUBUNIT</scope>
</reference>
<evidence type="ECO:0000250" key="1"/>
<evidence type="ECO:0000269" key="2">
    <source>
    </source>
</evidence>
<evidence type="ECO:0000305" key="3"/>
<keyword id="KW-0963">Cytoplasm</keyword>
<keyword id="KW-0903">Direct protein sequencing</keyword>
<keyword id="KW-0378">Hydrolase</keyword>
<organism>
    <name type="scientific">Blastochloris viridis</name>
    <name type="common">Rhodopseudomonas viridis</name>
    <dbReference type="NCBI Taxonomy" id="1079"/>
    <lineage>
        <taxon>Bacteria</taxon>
        <taxon>Pseudomonadati</taxon>
        <taxon>Pseudomonadota</taxon>
        <taxon>Alphaproteobacteria</taxon>
        <taxon>Hyphomicrobiales</taxon>
        <taxon>Blastochloridaceae</taxon>
        <taxon>Blastochloris</taxon>
    </lineage>
</organism>
<proteinExistence type="evidence at protein level"/>
<sequence>MRIDAIDXA</sequence>
<accession>P82992</accession>
<name>IPYR_BLAVI</name>
<protein>
    <recommendedName>
        <fullName>Inorganic pyrophosphatase</fullName>
        <ecNumber>3.6.1.1</ecNumber>
    </recommendedName>
    <alternativeName>
        <fullName>Pyrophosphate phospho-hydrolase</fullName>
        <shortName>PPase</shortName>
    </alternativeName>
</protein>
<dbReference type="EC" id="3.6.1.1"/>
<dbReference type="SABIO-RK" id="P82992"/>
<dbReference type="GO" id="GO:0005737">
    <property type="term" value="C:cytoplasm"/>
    <property type="evidence" value="ECO:0007669"/>
    <property type="project" value="UniProtKB-SubCell"/>
</dbReference>
<dbReference type="GO" id="GO:0004427">
    <property type="term" value="F:inorganic diphosphate phosphatase activity"/>
    <property type="evidence" value="ECO:0007669"/>
    <property type="project" value="UniProtKB-EC"/>
</dbReference>
<comment type="catalytic activity">
    <reaction evidence="2">
        <text>diphosphate + H2O = 2 phosphate + H(+)</text>
        <dbReference type="Rhea" id="RHEA:24576"/>
        <dbReference type="ChEBI" id="CHEBI:15377"/>
        <dbReference type="ChEBI" id="CHEBI:15378"/>
        <dbReference type="ChEBI" id="CHEBI:33019"/>
        <dbReference type="ChEBI" id="CHEBI:43474"/>
        <dbReference type="EC" id="3.6.1.1"/>
    </reaction>
</comment>
<comment type="cofactor">
    <cofactor evidence="2">
        <name>Mg(2+)</name>
        <dbReference type="ChEBI" id="CHEBI:18420"/>
    </cofactor>
    <text evidence="2">Has high activity in the presence of Zn(2+), Mn(2+), Cu(2+), Fe(2+) or Co(2+) ions. In the absence of metal ions, there is no activity.</text>
</comment>
<comment type="activity regulation">
    <text evidence="2">Inhibited by ATP, fructose 1,6-bisphosphate and 2-phosphoglycerate.</text>
</comment>
<comment type="biophysicochemical properties">
    <kinetics>
        <KM evidence="2">27.4 uM for PPi</KM>
    </kinetics>
</comment>
<comment type="subunit">
    <text evidence="2">Homododecamer.</text>
</comment>
<comment type="subcellular location">
    <subcellularLocation>
        <location evidence="1">Cytoplasm</location>
    </subcellularLocation>
</comment>
<comment type="similarity">
    <text evidence="3">Belongs to the PPase family.</text>
</comment>
<feature type="chain" id="PRO_0000137527" description="Inorganic pyrophosphatase">
    <location>
        <begin position="1"/>
        <end position="9" status="greater than"/>
    </location>
</feature>
<feature type="non-terminal residue">
    <location>
        <position position="9"/>
    </location>
</feature>